<protein>
    <recommendedName>
        <fullName evidence="1">Aspartate carbamoyltransferase catalytic subunit</fullName>
        <ecNumber evidence="1">2.1.3.2</ecNumber>
    </recommendedName>
    <alternativeName>
        <fullName evidence="1">Aspartate transcarbamylase</fullName>
        <shortName evidence="1">ATCase</shortName>
    </alternativeName>
</protein>
<reference key="1">
    <citation type="journal article" date="2009" name="J. Bacteriol.">
        <title>Complete genome sequence of Erythrobacter litoralis HTCC2594.</title>
        <authorList>
            <person name="Oh H.M."/>
            <person name="Giovannoni S.J."/>
            <person name="Ferriera S."/>
            <person name="Johnson J."/>
            <person name="Cho J.C."/>
        </authorList>
    </citation>
    <scope>NUCLEOTIDE SEQUENCE [LARGE SCALE GENOMIC DNA]</scope>
    <source>
        <strain>HTCC2594</strain>
    </source>
</reference>
<sequence length="347" mass="37604">MTSDGTPTQSGRYPAGGHAFPHGSLTGIAQLERHEILYLLDEAEQWVDFNRQSEKHCDLLAGLTIINAFFENSTRTLLSFEIAGKRLGADVVNMHAAQSSVKKGETLIDTAITLNAMRADAIVIRHGSSGAVDLIASKVDCPVLNAGDGQHEHPTQALLDALALRHALEARGEGSEDFTGLTITICGDILHSRVARSNILCLQAMGASVRVCAPPALMPVGIERMGAEPFHDFDAALKGCDVAMMLRLQTERMSGQFIPSAREYHHLYGLTQHRLQRCAPDALVMHPGPMNRGVEIDSDVADMLDRSIITRQVEMGVAVRMACLDILTRKGRGLPGWQGDLGKGQWA</sequence>
<name>PYRB_ERYLH</name>
<gene>
    <name evidence="1" type="primary">pyrB</name>
    <name type="ordered locus">ELI_01030</name>
</gene>
<feature type="chain" id="PRO_0000321101" description="Aspartate carbamoyltransferase catalytic subunit">
    <location>
        <begin position="1"/>
        <end position="347"/>
    </location>
</feature>
<feature type="binding site" evidence="1">
    <location>
        <position position="75"/>
    </location>
    <ligand>
        <name>carbamoyl phosphate</name>
        <dbReference type="ChEBI" id="CHEBI:58228"/>
    </ligand>
</feature>
<feature type="binding site" evidence="1">
    <location>
        <position position="76"/>
    </location>
    <ligand>
        <name>carbamoyl phosphate</name>
        <dbReference type="ChEBI" id="CHEBI:58228"/>
    </ligand>
</feature>
<feature type="binding site" evidence="1">
    <location>
        <position position="103"/>
    </location>
    <ligand>
        <name>L-aspartate</name>
        <dbReference type="ChEBI" id="CHEBI:29991"/>
    </ligand>
</feature>
<feature type="binding site" evidence="1">
    <location>
        <position position="125"/>
    </location>
    <ligand>
        <name>carbamoyl phosphate</name>
        <dbReference type="ChEBI" id="CHEBI:58228"/>
    </ligand>
</feature>
<feature type="binding site" evidence="1">
    <location>
        <position position="153"/>
    </location>
    <ligand>
        <name>carbamoyl phosphate</name>
        <dbReference type="ChEBI" id="CHEBI:58228"/>
    </ligand>
</feature>
<feature type="binding site" evidence="1">
    <location>
        <position position="156"/>
    </location>
    <ligand>
        <name>carbamoyl phosphate</name>
        <dbReference type="ChEBI" id="CHEBI:58228"/>
    </ligand>
</feature>
<feature type="binding site" evidence="1">
    <location>
        <position position="193"/>
    </location>
    <ligand>
        <name>L-aspartate</name>
        <dbReference type="ChEBI" id="CHEBI:29991"/>
    </ligand>
</feature>
<feature type="binding site" evidence="1">
    <location>
        <position position="247"/>
    </location>
    <ligand>
        <name>L-aspartate</name>
        <dbReference type="ChEBI" id="CHEBI:29991"/>
    </ligand>
</feature>
<feature type="binding site" evidence="1">
    <location>
        <position position="288"/>
    </location>
    <ligand>
        <name>carbamoyl phosphate</name>
        <dbReference type="ChEBI" id="CHEBI:58228"/>
    </ligand>
</feature>
<feature type="binding site" evidence="1">
    <location>
        <position position="289"/>
    </location>
    <ligand>
        <name>carbamoyl phosphate</name>
        <dbReference type="ChEBI" id="CHEBI:58228"/>
    </ligand>
</feature>
<proteinExistence type="inferred from homology"/>
<accession>Q2NDE3</accession>
<organism>
    <name type="scientific">Erythrobacter litoralis (strain HTCC2594)</name>
    <dbReference type="NCBI Taxonomy" id="314225"/>
    <lineage>
        <taxon>Bacteria</taxon>
        <taxon>Pseudomonadati</taxon>
        <taxon>Pseudomonadota</taxon>
        <taxon>Alphaproteobacteria</taxon>
        <taxon>Sphingomonadales</taxon>
        <taxon>Erythrobacteraceae</taxon>
        <taxon>Erythrobacter/Porphyrobacter group</taxon>
        <taxon>Erythrobacter</taxon>
    </lineage>
</organism>
<keyword id="KW-0665">Pyrimidine biosynthesis</keyword>
<keyword id="KW-1185">Reference proteome</keyword>
<keyword id="KW-0808">Transferase</keyword>
<comment type="function">
    <text evidence="1">Catalyzes the condensation of carbamoyl phosphate and aspartate to form carbamoyl aspartate and inorganic phosphate, the committed step in the de novo pyrimidine nucleotide biosynthesis pathway.</text>
</comment>
<comment type="catalytic activity">
    <reaction evidence="1">
        <text>carbamoyl phosphate + L-aspartate = N-carbamoyl-L-aspartate + phosphate + H(+)</text>
        <dbReference type="Rhea" id="RHEA:20013"/>
        <dbReference type="ChEBI" id="CHEBI:15378"/>
        <dbReference type="ChEBI" id="CHEBI:29991"/>
        <dbReference type="ChEBI" id="CHEBI:32814"/>
        <dbReference type="ChEBI" id="CHEBI:43474"/>
        <dbReference type="ChEBI" id="CHEBI:58228"/>
        <dbReference type="EC" id="2.1.3.2"/>
    </reaction>
</comment>
<comment type="pathway">
    <text evidence="1">Pyrimidine metabolism; UMP biosynthesis via de novo pathway; (S)-dihydroorotate from bicarbonate: step 2/3.</text>
</comment>
<comment type="subunit">
    <text evidence="1">Heterododecamer (2C3:3R2) of six catalytic PyrB chains organized as two trimers (C3), and six regulatory PyrI chains organized as three dimers (R2).</text>
</comment>
<comment type="similarity">
    <text evidence="1">Belongs to the aspartate/ornithine carbamoyltransferase superfamily. ATCase family.</text>
</comment>
<evidence type="ECO:0000255" key="1">
    <source>
        <dbReference type="HAMAP-Rule" id="MF_00001"/>
    </source>
</evidence>
<dbReference type="EC" id="2.1.3.2" evidence="1"/>
<dbReference type="EMBL" id="CP000157">
    <property type="protein sequence ID" value="ABC62298.1"/>
    <property type="molecule type" value="Genomic_DNA"/>
</dbReference>
<dbReference type="RefSeq" id="WP_011413174.1">
    <property type="nucleotide sequence ID" value="NC_007722.1"/>
</dbReference>
<dbReference type="SMR" id="Q2NDE3"/>
<dbReference type="STRING" id="314225.ELI_01030"/>
<dbReference type="KEGG" id="eli:ELI_01030"/>
<dbReference type="eggNOG" id="COG0540">
    <property type="taxonomic scope" value="Bacteria"/>
</dbReference>
<dbReference type="HOGENOM" id="CLU_043846_2_0_5"/>
<dbReference type="OrthoDB" id="9774690at2"/>
<dbReference type="UniPathway" id="UPA00070">
    <property type="reaction ID" value="UER00116"/>
</dbReference>
<dbReference type="Proteomes" id="UP000008808">
    <property type="component" value="Chromosome"/>
</dbReference>
<dbReference type="GO" id="GO:0005829">
    <property type="term" value="C:cytosol"/>
    <property type="evidence" value="ECO:0007669"/>
    <property type="project" value="TreeGrafter"/>
</dbReference>
<dbReference type="GO" id="GO:0016597">
    <property type="term" value="F:amino acid binding"/>
    <property type="evidence" value="ECO:0007669"/>
    <property type="project" value="InterPro"/>
</dbReference>
<dbReference type="GO" id="GO:0004070">
    <property type="term" value="F:aspartate carbamoyltransferase activity"/>
    <property type="evidence" value="ECO:0007669"/>
    <property type="project" value="UniProtKB-UniRule"/>
</dbReference>
<dbReference type="GO" id="GO:0006207">
    <property type="term" value="P:'de novo' pyrimidine nucleobase biosynthetic process"/>
    <property type="evidence" value="ECO:0007669"/>
    <property type="project" value="InterPro"/>
</dbReference>
<dbReference type="GO" id="GO:0044205">
    <property type="term" value="P:'de novo' UMP biosynthetic process"/>
    <property type="evidence" value="ECO:0007669"/>
    <property type="project" value="UniProtKB-UniRule"/>
</dbReference>
<dbReference type="GO" id="GO:0006520">
    <property type="term" value="P:amino acid metabolic process"/>
    <property type="evidence" value="ECO:0007669"/>
    <property type="project" value="InterPro"/>
</dbReference>
<dbReference type="FunFam" id="3.40.50.1370:FF:000007">
    <property type="entry name" value="Aspartate carbamoyltransferase"/>
    <property type="match status" value="1"/>
</dbReference>
<dbReference type="Gene3D" id="3.40.50.1370">
    <property type="entry name" value="Aspartate/ornithine carbamoyltransferase"/>
    <property type="match status" value="2"/>
</dbReference>
<dbReference type="HAMAP" id="MF_00001">
    <property type="entry name" value="Asp_carb_tr"/>
    <property type="match status" value="1"/>
</dbReference>
<dbReference type="InterPro" id="IPR006132">
    <property type="entry name" value="Asp/Orn_carbamoyltranf_P-bd"/>
</dbReference>
<dbReference type="InterPro" id="IPR006130">
    <property type="entry name" value="Asp/Orn_carbamoylTrfase"/>
</dbReference>
<dbReference type="InterPro" id="IPR036901">
    <property type="entry name" value="Asp/Orn_carbamoylTrfase_sf"/>
</dbReference>
<dbReference type="InterPro" id="IPR002082">
    <property type="entry name" value="Asp_carbamoyltransf"/>
</dbReference>
<dbReference type="InterPro" id="IPR006131">
    <property type="entry name" value="Asp_carbamoyltransf_Asp/Orn-bd"/>
</dbReference>
<dbReference type="NCBIfam" id="TIGR00670">
    <property type="entry name" value="asp_carb_tr"/>
    <property type="match status" value="1"/>
</dbReference>
<dbReference type="NCBIfam" id="NF002032">
    <property type="entry name" value="PRK00856.1"/>
    <property type="match status" value="1"/>
</dbReference>
<dbReference type="PANTHER" id="PTHR45753:SF6">
    <property type="entry name" value="ASPARTATE CARBAMOYLTRANSFERASE"/>
    <property type="match status" value="1"/>
</dbReference>
<dbReference type="PANTHER" id="PTHR45753">
    <property type="entry name" value="ORNITHINE CARBAMOYLTRANSFERASE, MITOCHONDRIAL"/>
    <property type="match status" value="1"/>
</dbReference>
<dbReference type="Pfam" id="PF00185">
    <property type="entry name" value="OTCace"/>
    <property type="match status" value="1"/>
</dbReference>
<dbReference type="Pfam" id="PF02729">
    <property type="entry name" value="OTCace_N"/>
    <property type="match status" value="1"/>
</dbReference>
<dbReference type="PRINTS" id="PR00100">
    <property type="entry name" value="AOTCASE"/>
</dbReference>
<dbReference type="PRINTS" id="PR00101">
    <property type="entry name" value="ATCASE"/>
</dbReference>
<dbReference type="SUPFAM" id="SSF53671">
    <property type="entry name" value="Aspartate/ornithine carbamoyltransferase"/>
    <property type="match status" value="1"/>
</dbReference>
<dbReference type="PROSITE" id="PS00097">
    <property type="entry name" value="CARBAMOYLTRANSFERASE"/>
    <property type="match status" value="1"/>
</dbReference>